<accession>A0JNI5</accession>
<proteinExistence type="evidence at transcript level"/>
<protein>
    <recommendedName>
        <fullName>CLK4-associating serine/arginine rich protein</fullName>
    </recommendedName>
    <alternativeName>
        <fullName>Splicing factor, arginine/serine-rich 16</fullName>
    </alternativeName>
</protein>
<comment type="function">
    <text evidence="1">Probably functions as an alternative splicing regulator. May regulate the mRNA splicing of genes such as CLK1. May act by regulating members of the CLK kinase family (By similarity).</text>
</comment>
<comment type="subunit">
    <text evidence="1">Probably interacts with CLK4.</text>
</comment>
<comment type="subcellular location">
    <subcellularLocation>
        <location evidence="1">Nucleus</location>
    </subcellularLocation>
</comment>
<comment type="PTM">
    <text evidence="1">Phosphorylated in vitro by CLK4.</text>
</comment>
<comment type="similarity">
    <text evidence="5">Belongs to the splicing factor SR family.</text>
</comment>
<comment type="caution">
    <text evidence="5">It is uncertain whether Met-1 or Met-16 is the initiator.</text>
</comment>
<reference key="1">
    <citation type="submission" date="2006-10" db="EMBL/GenBank/DDBJ databases">
        <authorList>
            <consortium name="NIH - Mammalian Gene Collection (MGC) project"/>
        </authorList>
    </citation>
    <scope>NUCLEOTIDE SEQUENCE [LARGE SCALE MRNA]</scope>
    <source>
        <strain>Hereford</strain>
        <tissue>Hypothalamus</tissue>
    </source>
</reference>
<organism>
    <name type="scientific">Bos taurus</name>
    <name type="common">Bovine</name>
    <dbReference type="NCBI Taxonomy" id="9913"/>
    <lineage>
        <taxon>Eukaryota</taxon>
        <taxon>Metazoa</taxon>
        <taxon>Chordata</taxon>
        <taxon>Craniata</taxon>
        <taxon>Vertebrata</taxon>
        <taxon>Euteleostomi</taxon>
        <taxon>Mammalia</taxon>
        <taxon>Eutheria</taxon>
        <taxon>Laurasiatheria</taxon>
        <taxon>Artiodactyla</taxon>
        <taxon>Ruminantia</taxon>
        <taxon>Pecora</taxon>
        <taxon>Bovidae</taxon>
        <taxon>Bovinae</taxon>
        <taxon>Bos</taxon>
    </lineage>
</organism>
<evidence type="ECO:0000250" key="1"/>
<evidence type="ECO:0000250" key="2">
    <source>
        <dbReference type="UniProtKB" id="Q8N2M8"/>
    </source>
</evidence>
<evidence type="ECO:0000255" key="3"/>
<evidence type="ECO:0000256" key="4">
    <source>
        <dbReference type="SAM" id="MobiDB-lite"/>
    </source>
</evidence>
<evidence type="ECO:0000305" key="5"/>
<feature type="chain" id="PRO_0000370322" description="CLK4-associating serine/arginine rich protein">
    <location>
        <begin position="1"/>
        <end position="670"/>
    </location>
</feature>
<feature type="region of interest" description="Disordered" evidence="4">
    <location>
        <begin position="171"/>
        <end position="232"/>
    </location>
</feature>
<feature type="region of interest" description="Disordered" evidence="4">
    <location>
        <begin position="258"/>
        <end position="670"/>
    </location>
</feature>
<feature type="coiled-coil region" evidence="3">
    <location>
        <begin position="581"/>
        <end position="643"/>
    </location>
</feature>
<feature type="compositionally biased region" description="Acidic residues" evidence="4">
    <location>
        <begin position="182"/>
        <end position="214"/>
    </location>
</feature>
<feature type="compositionally biased region" description="Basic residues" evidence="4">
    <location>
        <begin position="265"/>
        <end position="283"/>
    </location>
</feature>
<feature type="compositionally biased region" description="Basic and acidic residues" evidence="4">
    <location>
        <begin position="290"/>
        <end position="313"/>
    </location>
</feature>
<feature type="compositionally biased region" description="Low complexity" evidence="4">
    <location>
        <begin position="340"/>
        <end position="355"/>
    </location>
</feature>
<feature type="compositionally biased region" description="Pro residues" evidence="4">
    <location>
        <begin position="356"/>
        <end position="365"/>
    </location>
</feature>
<feature type="compositionally biased region" description="Low complexity" evidence="4">
    <location>
        <begin position="378"/>
        <end position="400"/>
    </location>
</feature>
<feature type="compositionally biased region" description="Basic residues" evidence="4">
    <location>
        <begin position="411"/>
        <end position="443"/>
    </location>
</feature>
<feature type="compositionally biased region" description="Basic residues" evidence="4">
    <location>
        <begin position="481"/>
        <end position="491"/>
    </location>
</feature>
<feature type="compositionally biased region" description="Low complexity" evidence="4">
    <location>
        <begin position="492"/>
        <end position="529"/>
    </location>
</feature>
<feature type="compositionally biased region" description="Basic and acidic residues" evidence="4">
    <location>
        <begin position="586"/>
        <end position="613"/>
    </location>
</feature>
<feature type="compositionally biased region" description="Basic and acidic residues" evidence="4">
    <location>
        <begin position="621"/>
        <end position="637"/>
    </location>
</feature>
<feature type="compositionally biased region" description="Low complexity" evidence="4">
    <location>
        <begin position="638"/>
        <end position="647"/>
    </location>
</feature>
<feature type="compositionally biased region" description="Basic residues" evidence="4">
    <location>
        <begin position="655"/>
        <end position="670"/>
    </location>
</feature>
<feature type="modified residue" description="Phosphoserine" evidence="2">
    <location>
        <position position="101"/>
    </location>
</feature>
<feature type="modified residue" description="Phosphoserine" evidence="2">
    <location>
        <position position="285"/>
    </location>
</feature>
<feature type="modified residue" description="Phosphoserine" evidence="2">
    <location>
        <position position="294"/>
    </location>
</feature>
<feature type="modified residue" description="Phosphothreonine" evidence="2">
    <location>
        <position position="327"/>
    </location>
</feature>
<feature type="modified residue" description="Phosphoserine" evidence="2">
    <location>
        <position position="331"/>
    </location>
</feature>
<feature type="modified residue" description="Phosphoserine" evidence="2">
    <location>
        <position position="335"/>
    </location>
</feature>
<feature type="modified residue" description="Phosphoserine" evidence="2">
    <location>
        <position position="543"/>
    </location>
</feature>
<feature type="modified residue" description="Phosphothreonine" evidence="2">
    <location>
        <position position="569"/>
    </location>
</feature>
<name>CLASR_BOVIN</name>
<gene>
    <name type="primary">CLASRP</name>
    <name type="synonym">SFRS16</name>
</gene>
<dbReference type="EMBL" id="BC126701">
    <property type="protein sequence ID" value="AAI26702.1"/>
    <property type="molecule type" value="mRNA"/>
</dbReference>
<dbReference type="RefSeq" id="NP_001071355.1">
    <property type="nucleotide sequence ID" value="NM_001077887.2"/>
</dbReference>
<dbReference type="RefSeq" id="XP_024833845.1">
    <property type="nucleotide sequence ID" value="XM_024978077.2"/>
</dbReference>
<dbReference type="SMR" id="A0JNI5"/>
<dbReference type="FunCoup" id="A0JNI5">
    <property type="interactions" value="3956"/>
</dbReference>
<dbReference type="STRING" id="9913.ENSBTAP00000057712"/>
<dbReference type="iPTMnet" id="A0JNI5"/>
<dbReference type="PaxDb" id="9913-ENSBTAP00000018204"/>
<dbReference type="GeneID" id="509208"/>
<dbReference type="KEGG" id="bta:509208"/>
<dbReference type="CTD" id="11129"/>
<dbReference type="VEuPathDB" id="HostDB:ENSBTAG00000013697"/>
<dbReference type="eggNOG" id="KOG2548">
    <property type="taxonomic scope" value="Eukaryota"/>
</dbReference>
<dbReference type="HOGENOM" id="CLU_008114_1_0_1"/>
<dbReference type="InParanoid" id="A0JNI5"/>
<dbReference type="OMA" id="YSECAPV"/>
<dbReference type="OrthoDB" id="10070965at2759"/>
<dbReference type="TreeFam" id="TF351621"/>
<dbReference type="Proteomes" id="UP000009136">
    <property type="component" value="Chromosome 18"/>
</dbReference>
<dbReference type="Bgee" id="ENSBTAG00000013697">
    <property type="expression patterns" value="Expressed in retina and 104 other cell types or tissues"/>
</dbReference>
<dbReference type="GO" id="GO:0005634">
    <property type="term" value="C:nucleus"/>
    <property type="evidence" value="ECO:0007669"/>
    <property type="project" value="UniProtKB-SubCell"/>
</dbReference>
<dbReference type="GO" id="GO:0006397">
    <property type="term" value="P:mRNA processing"/>
    <property type="evidence" value="ECO:0007669"/>
    <property type="project" value="UniProtKB-KW"/>
</dbReference>
<dbReference type="GO" id="GO:0008380">
    <property type="term" value="P:RNA splicing"/>
    <property type="evidence" value="ECO:0007669"/>
    <property type="project" value="UniProtKB-KW"/>
</dbReference>
<dbReference type="InterPro" id="IPR040397">
    <property type="entry name" value="SWAP"/>
</dbReference>
<dbReference type="InterPro" id="IPR019147">
    <property type="entry name" value="SWAP_N_domain"/>
</dbReference>
<dbReference type="PANTHER" id="PTHR13161:SF4">
    <property type="entry name" value="CLK4-ASSOCIATING SERINE_ARGININE RICH PROTEIN"/>
    <property type="match status" value="1"/>
</dbReference>
<dbReference type="PANTHER" id="PTHR13161">
    <property type="entry name" value="SPLICING FACTOR SUPPRESSOR OF WHITE APRICOT"/>
    <property type="match status" value="1"/>
</dbReference>
<dbReference type="Pfam" id="PF09750">
    <property type="entry name" value="DRY_EERY"/>
    <property type="match status" value="1"/>
</dbReference>
<dbReference type="SMART" id="SM01141">
    <property type="entry name" value="DRY_EERY"/>
    <property type="match status" value="1"/>
</dbReference>
<sequence length="670" mass="76791">MWHEARKHERKLRGMMVDYKKRAERRREYYEKIKKDPAQFLQVHGRACKVHLDSAVALAAESPVNMMPWQGDTNNMIDRFDVRAHLDHIPDYTPPLLTTISPEQESDERKCNYERYRGLVQNDFAGISEEQCLYQIYIDELYGGLQRPSEDEKKKLAEKKASIGYTYEDSTVAEVEKVTEKPEEEESPAEEESNSDEDEVIPDIDVEVDVDELNQEQVADLNKQATTYGMADGDFVRMLRKDKEEAEAIKHAKALEEEKAMYSGRRSRRQRREFREKRLRGRKISPPSYARRDSPTYDPYKRSPSESSSESRSRSRSPTPGREEKITFITSFGGSDEEAAAAAAAAAASGAATGKPPAPPQPGGPAPGRNASARRRSSTSSSSSSASRTSSSRSRSSSSSRSRRGGGYYRSGRHARSRSRSWSRSRSRSRRYSRSRSRGRRHSGGGSRDGHRYSRSPARRGGYGPRRRSRSRSRSGDRYRRGGRGPRHHSSSRSSWSLSPSRSRSLTRSRSPSLSRSRSLSRSRSQSHSPSPPREKLSRPAASPAVGEKLKKTEPAAGKETGAAKPKLTPQEKLKLRMQKALNRQFKADKKAAQEKMIQQEHERQEREDELRAMARKIRMKERERREKEREEWERQYSRQSRSPSPRYSREYSSSRRRSRSRSRSPHYRH</sequence>
<keyword id="KW-0175">Coiled coil</keyword>
<keyword id="KW-0507">mRNA processing</keyword>
<keyword id="KW-0508">mRNA splicing</keyword>
<keyword id="KW-0539">Nucleus</keyword>
<keyword id="KW-0597">Phosphoprotein</keyword>
<keyword id="KW-1185">Reference proteome</keyword>